<protein>
    <recommendedName>
        <fullName evidence="1">33 kDa chaperonin</fullName>
    </recommendedName>
    <alternativeName>
        <fullName evidence="1">Heat shock protein 33 homolog</fullName>
        <shortName evidence="1">HSP33</shortName>
    </alternativeName>
</protein>
<dbReference type="EMBL" id="AE016830">
    <property type="protein sequence ID" value="AAO80131.1"/>
    <property type="molecule type" value="Genomic_DNA"/>
</dbReference>
<dbReference type="RefSeq" id="NP_814060.1">
    <property type="nucleotide sequence ID" value="NC_004668.1"/>
</dbReference>
<dbReference type="RefSeq" id="WP_002359370.1">
    <property type="nucleotide sequence ID" value="NZ_KE136524.1"/>
</dbReference>
<dbReference type="SMR" id="Q839B0"/>
<dbReference type="STRING" id="226185.EF_0266"/>
<dbReference type="EnsemblBacteria" id="AAO80131">
    <property type="protein sequence ID" value="AAO80131"/>
    <property type="gene ID" value="EF_0266"/>
</dbReference>
<dbReference type="GeneID" id="60892757"/>
<dbReference type="KEGG" id="efa:EF0266"/>
<dbReference type="PATRIC" id="fig|226185.45.peg.3"/>
<dbReference type="eggNOG" id="COG1281">
    <property type="taxonomic scope" value="Bacteria"/>
</dbReference>
<dbReference type="HOGENOM" id="CLU_054493_1_0_9"/>
<dbReference type="Proteomes" id="UP000001415">
    <property type="component" value="Chromosome"/>
</dbReference>
<dbReference type="GO" id="GO:0005737">
    <property type="term" value="C:cytoplasm"/>
    <property type="evidence" value="ECO:0007669"/>
    <property type="project" value="UniProtKB-SubCell"/>
</dbReference>
<dbReference type="GO" id="GO:0044183">
    <property type="term" value="F:protein folding chaperone"/>
    <property type="evidence" value="ECO:0007669"/>
    <property type="project" value="TreeGrafter"/>
</dbReference>
<dbReference type="GO" id="GO:0051082">
    <property type="term" value="F:unfolded protein binding"/>
    <property type="evidence" value="ECO:0007669"/>
    <property type="project" value="UniProtKB-UniRule"/>
</dbReference>
<dbReference type="GO" id="GO:0042026">
    <property type="term" value="P:protein refolding"/>
    <property type="evidence" value="ECO:0007669"/>
    <property type="project" value="TreeGrafter"/>
</dbReference>
<dbReference type="CDD" id="cd00498">
    <property type="entry name" value="Hsp33"/>
    <property type="match status" value="1"/>
</dbReference>
<dbReference type="Gene3D" id="3.55.30.10">
    <property type="entry name" value="Hsp33 domain"/>
    <property type="match status" value="1"/>
</dbReference>
<dbReference type="Gene3D" id="3.90.1280.10">
    <property type="entry name" value="HSP33 redox switch-like"/>
    <property type="match status" value="1"/>
</dbReference>
<dbReference type="HAMAP" id="MF_00117">
    <property type="entry name" value="HslO"/>
    <property type="match status" value="1"/>
</dbReference>
<dbReference type="InterPro" id="IPR000397">
    <property type="entry name" value="Heat_shock_Hsp33"/>
</dbReference>
<dbReference type="InterPro" id="IPR016154">
    <property type="entry name" value="Heat_shock_Hsp33_C"/>
</dbReference>
<dbReference type="InterPro" id="IPR016153">
    <property type="entry name" value="Heat_shock_Hsp33_N"/>
</dbReference>
<dbReference type="NCBIfam" id="NF001033">
    <property type="entry name" value="PRK00114.1"/>
    <property type="match status" value="1"/>
</dbReference>
<dbReference type="PANTHER" id="PTHR30111">
    <property type="entry name" value="33 KDA CHAPERONIN"/>
    <property type="match status" value="1"/>
</dbReference>
<dbReference type="PANTHER" id="PTHR30111:SF1">
    <property type="entry name" value="33 KDA CHAPERONIN"/>
    <property type="match status" value="1"/>
</dbReference>
<dbReference type="Pfam" id="PF01430">
    <property type="entry name" value="HSP33"/>
    <property type="match status" value="1"/>
</dbReference>
<dbReference type="PIRSF" id="PIRSF005261">
    <property type="entry name" value="Heat_shock_Hsp33"/>
    <property type="match status" value="1"/>
</dbReference>
<dbReference type="SUPFAM" id="SSF64397">
    <property type="entry name" value="Hsp33 domain"/>
    <property type="match status" value="1"/>
</dbReference>
<dbReference type="SUPFAM" id="SSF118352">
    <property type="entry name" value="HSP33 redox switch-like"/>
    <property type="match status" value="1"/>
</dbReference>
<keyword id="KW-0143">Chaperone</keyword>
<keyword id="KW-0963">Cytoplasm</keyword>
<keyword id="KW-1015">Disulfide bond</keyword>
<keyword id="KW-0676">Redox-active center</keyword>
<keyword id="KW-1185">Reference proteome</keyword>
<keyword id="KW-0862">Zinc</keyword>
<organism>
    <name type="scientific">Enterococcus faecalis (strain ATCC 700802 / V583)</name>
    <dbReference type="NCBI Taxonomy" id="226185"/>
    <lineage>
        <taxon>Bacteria</taxon>
        <taxon>Bacillati</taxon>
        <taxon>Bacillota</taxon>
        <taxon>Bacilli</taxon>
        <taxon>Lactobacillales</taxon>
        <taxon>Enterococcaceae</taxon>
        <taxon>Enterococcus</taxon>
    </lineage>
</organism>
<reference key="1">
    <citation type="journal article" date="2003" name="Science">
        <title>Role of mobile DNA in the evolution of vancomycin-resistant Enterococcus faecalis.</title>
        <authorList>
            <person name="Paulsen I.T."/>
            <person name="Banerjei L."/>
            <person name="Myers G.S.A."/>
            <person name="Nelson K.E."/>
            <person name="Seshadri R."/>
            <person name="Read T.D."/>
            <person name="Fouts D.E."/>
            <person name="Eisen J.A."/>
            <person name="Gill S.R."/>
            <person name="Heidelberg J.F."/>
            <person name="Tettelin H."/>
            <person name="Dodson R.J."/>
            <person name="Umayam L.A."/>
            <person name="Brinkac L.M."/>
            <person name="Beanan M.J."/>
            <person name="Daugherty S.C."/>
            <person name="DeBoy R.T."/>
            <person name="Durkin S.A."/>
            <person name="Kolonay J.F."/>
            <person name="Madupu R."/>
            <person name="Nelson W.C."/>
            <person name="Vamathevan J.J."/>
            <person name="Tran B."/>
            <person name="Upton J."/>
            <person name="Hansen T."/>
            <person name="Shetty J."/>
            <person name="Khouri H.M."/>
            <person name="Utterback T.R."/>
            <person name="Radune D."/>
            <person name="Ketchum K.A."/>
            <person name="Dougherty B.A."/>
            <person name="Fraser C.M."/>
        </authorList>
    </citation>
    <scope>NUCLEOTIDE SEQUENCE [LARGE SCALE GENOMIC DNA]</scope>
    <source>
        <strain>ATCC 700802 / V583</strain>
    </source>
</reference>
<sequence>MEDYLVKALCYKGSIRAYAISATETVSEAQRRHDTWSSSTAALGRTLIGALLLGATLKGDDKLTVKVQGNGPAGAIIVDSNGRGETKGYIKNPHVSLKLNATGKIDVRGAVGNEGIFTVIKDLGLKETFSGQTPIVSGEIGEDFTYFMAVSEQVPSAIGLGVLVDTDESVKAAGGFMIQVMPGADESTIDFIEQRLAEVPPISQLLENGETPEQVLYRLLGEDEVEILEKMPVQFKCDCSKEKFATALIAVGIDELNAMIDEDHGAEAVCQFCNNKYHYSEEELIELRDEAIRNTKQK</sequence>
<gene>
    <name evidence="1" type="primary">hslO</name>
    <name type="ordered locus">EF_0266</name>
</gene>
<feature type="chain" id="PRO_0000192177" description="33 kDa chaperonin">
    <location>
        <begin position="1"/>
        <end position="298"/>
    </location>
</feature>
<feature type="disulfide bond" description="Redox-active" evidence="1">
    <location>
        <begin position="237"/>
        <end position="239"/>
    </location>
</feature>
<feature type="disulfide bond" description="Redox-active" evidence="1">
    <location>
        <begin position="270"/>
        <end position="273"/>
    </location>
</feature>
<comment type="function">
    <text evidence="1">Redox regulated molecular chaperone. Protects both thermally unfolding and oxidatively damaged proteins from irreversible aggregation. Plays an important role in the bacterial defense system toward oxidative stress.</text>
</comment>
<comment type="subcellular location">
    <subcellularLocation>
        <location evidence="1">Cytoplasm</location>
    </subcellularLocation>
</comment>
<comment type="PTM">
    <text evidence="1">Under oxidizing conditions two disulfide bonds are formed involving the reactive cysteines. Under reducing conditions zinc is bound to the reactive cysteines and the protein is inactive.</text>
</comment>
<comment type="similarity">
    <text evidence="1">Belongs to the HSP33 family.</text>
</comment>
<evidence type="ECO:0000255" key="1">
    <source>
        <dbReference type="HAMAP-Rule" id="MF_00117"/>
    </source>
</evidence>
<name>HSLO_ENTFA</name>
<accession>Q839B0</accession>
<proteinExistence type="inferred from homology"/>